<accession>P0ABG8</accession>
<accession>P13409</accession>
<accession>P15035</accession>
<feature type="chain" id="PRO_0000062716" description="Peptidoglycan glycosyltransferase MrdB">
    <location>
        <begin position="1"/>
        <end position="370"/>
    </location>
</feature>
<feature type="transmembrane region" description="Helical" evidence="1">
    <location>
        <begin position="20"/>
        <end position="40"/>
    </location>
</feature>
<feature type="transmembrane region" description="Helical" evidence="1">
    <location>
        <begin position="50"/>
        <end position="70"/>
    </location>
</feature>
<feature type="transmembrane region" description="Helical" evidence="1">
    <location>
        <begin position="75"/>
        <end position="95"/>
    </location>
</feature>
<feature type="transmembrane region" description="Helical" evidence="1">
    <location>
        <begin position="136"/>
        <end position="156"/>
    </location>
</feature>
<feature type="transmembrane region" description="Helical" evidence="1">
    <location>
        <begin position="160"/>
        <end position="180"/>
    </location>
</feature>
<feature type="transmembrane region" description="Helical" evidence="1">
    <location>
        <begin position="183"/>
        <end position="203"/>
    </location>
</feature>
<feature type="transmembrane region" description="Helical" evidence="1">
    <location>
        <begin position="263"/>
        <end position="283"/>
    </location>
</feature>
<feature type="transmembrane region" description="Helical" evidence="1">
    <location>
        <begin position="312"/>
        <end position="332"/>
    </location>
</feature>
<feature type="transmembrane region" description="Helical" evidence="1">
    <location>
        <begin position="336"/>
        <end position="356"/>
    </location>
</feature>
<organism>
    <name type="scientific">Escherichia coli O157:H7</name>
    <dbReference type="NCBI Taxonomy" id="83334"/>
    <lineage>
        <taxon>Bacteria</taxon>
        <taxon>Pseudomonadati</taxon>
        <taxon>Pseudomonadota</taxon>
        <taxon>Gammaproteobacteria</taxon>
        <taxon>Enterobacterales</taxon>
        <taxon>Enterobacteriaceae</taxon>
        <taxon>Escherichia</taxon>
    </lineage>
</organism>
<comment type="function">
    <text evidence="1">Peptidoglycan polymerase that is essential for cell wall elongation.</text>
</comment>
<comment type="catalytic activity">
    <reaction evidence="1">
        <text>[GlcNAc-(1-&gt;4)-Mur2Ac(oyl-L-Ala-gamma-D-Glu-L-Lys-D-Ala-D-Ala)](n)-di-trans,octa-cis-undecaprenyl diphosphate + beta-D-GlcNAc-(1-&gt;4)-Mur2Ac(oyl-L-Ala-gamma-D-Glu-L-Lys-D-Ala-D-Ala)-di-trans,octa-cis-undecaprenyl diphosphate = [GlcNAc-(1-&gt;4)-Mur2Ac(oyl-L-Ala-gamma-D-Glu-L-Lys-D-Ala-D-Ala)](n+1)-di-trans,octa-cis-undecaprenyl diphosphate + di-trans,octa-cis-undecaprenyl diphosphate + H(+)</text>
        <dbReference type="Rhea" id="RHEA:23708"/>
        <dbReference type="Rhea" id="RHEA-COMP:9602"/>
        <dbReference type="Rhea" id="RHEA-COMP:9603"/>
        <dbReference type="ChEBI" id="CHEBI:15378"/>
        <dbReference type="ChEBI" id="CHEBI:58405"/>
        <dbReference type="ChEBI" id="CHEBI:60033"/>
        <dbReference type="ChEBI" id="CHEBI:78435"/>
        <dbReference type="EC" id="2.4.99.28"/>
    </reaction>
</comment>
<comment type="pathway">
    <text evidence="1">Cell wall biogenesis; peptidoglycan biosynthesis.</text>
</comment>
<comment type="subcellular location">
    <subcellularLocation>
        <location evidence="1">Cell inner membrane</location>
        <topology evidence="1">Multi-pass membrane protein</topology>
    </subcellularLocation>
</comment>
<comment type="similarity">
    <text evidence="1">Belongs to the SEDS family. MrdB/RodA subfamily.</text>
</comment>
<keyword id="KW-0997">Cell inner membrane</keyword>
<keyword id="KW-1003">Cell membrane</keyword>
<keyword id="KW-0133">Cell shape</keyword>
<keyword id="KW-0961">Cell wall biogenesis/degradation</keyword>
<keyword id="KW-0328">Glycosyltransferase</keyword>
<keyword id="KW-0472">Membrane</keyword>
<keyword id="KW-0573">Peptidoglycan synthesis</keyword>
<keyword id="KW-1185">Reference proteome</keyword>
<keyword id="KW-0808">Transferase</keyword>
<keyword id="KW-0812">Transmembrane</keyword>
<keyword id="KW-1133">Transmembrane helix</keyword>
<evidence type="ECO:0000255" key="1">
    <source>
        <dbReference type="HAMAP-Rule" id="MF_02079"/>
    </source>
</evidence>
<protein>
    <recommendedName>
        <fullName evidence="1">Peptidoglycan glycosyltransferase MrdB</fullName>
        <shortName evidence="1">PGT</shortName>
        <ecNumber evidence="1">2.4.99.28</ecNumber>
    </recommendedName>
    <alternativeName>
        <fullName evidence="1">Cell elongation protein RodA</fullName>
    </alternativeName>
    <alternativeName>
        <fullName evidence="1">Cell wall polymerase</fullName>
    </alternativeName>
    <alternativeName>
        <fullName evidence="1">Peptidoglycan polymerase</fullName>
        <shortName evidence="1">PG polymerase</shortName>
    </alternativeName>
</protein>
<proteinExistence type="inferred from homology"/>
<sequence>MTDNPNKKTFWDKVHLDPTMLLILLALLVYSALVIWSASGQDIGMMERKIGQIAMGLVIMVVMAQIPPRVYEGWAPYLYIICIILLVAVDAFGAISKGAQRWLDLGIVRFQPSEIAKIAVPLMVARFINRDVCPPSLKNTGIALVLIFMPTLLVAAQPDLGTSILVALSGLFVLFLSGLSWRLIGVAVVLVAAFIPILWFFLMHDYQRQRVMMLLDPESDPLGAGYHIIQSKIAIGSGGLRGKGWLHGTQSQLEFLPERHTDFIFAVLAEELGLVGILILLALYILLIMRGLWIAARAQTTFGRVMAGGLMLILFVYVFVNIGMVSGILPVVGVPLPLVSYGGSALIVLMAGFGIVMSIHTHRKMLSKSV</sequence>
<name>RODA_ECO57</name>
<dbReference type="EC" id="2.4.99.28" evidence="1"/>
<dbReference type="EMBL" id="AE005174">
    <property type="protein sequence ID" value="AAG54968.1"/>
    <property type="molecule type" value="Genomic_DNA"/>
</dbReference>
<dbReference type="EMBL" id="BA000007">
    <property type="protein sequence ID" value="BAB34095.1"/>
    <property type="molecule type" value="Genomic_DNA"/>
</dbReference>
<dbReference type="PIR" id="D85563">
    <property type="entry name" value="D85563"/>
</dbReference>
<dbReference type="PIR" id="H90712">
    <property type="entry name" value="H90712"/>
</dbReference>
<dbReference type="RefSeq" id="NP_308699.1">
    <property type="nucleotide sequence ID" value="NC_002695.1"/>
</dbReference>
<dbReference type="RefSeq" id="WP_000131719.1">
    <property type="nucleotide sequence ID" value="NZ_VOAI01000012.1"/>
</dbReference>
<dbReference type="SMR" id="P0ABG8"/>
<dbReference type="STRING" id="155864.Z0780"/>
<dbReference type="GeneID" id="917033"/>
<dbReference type="GeneID" id="93776848"/>
<dbReference type="KEGG" id="ece:Z0780"/>
<dbReference type="KEGG" id="ecs:ECs_0672"/>
<dbReference type="PATRIC" id="fig|386585.9.peg.784"/>
<dbReference type="eggNOG" id="COG0772">
    <property type="taxonomic scope" value="Bacteria"/>
</dbReference>
<dbReference type="HOGENOM" id="CLU_029243_2_2_6"/>
<dbReference type="OMA" id="PMMVAWY"/>
<dbReference type="UniPathway" id="UPA00219"/>
<dbReference type="Proteomes" id="UP000000558">
    <property type="component" value="Chromosome"/>
</dbReference>
<dbReference type="Proteomes" id="UP000002519">
    <property type="component" value="Chromosome"/>
</dbReference>
<dbReference type="GO" id="GO:0032153">
    <property type="term" value="C:cell division site"/>
    <property type="evidence" value="ECO:0007669"/>
    <property type="project" value="TreeGrafter"/>
</dbReference>
<dbReference type="GO" id="GO:0005886">
    <property type="term" value="C:plasma membrane"/>
    <property type="evidence" value="ECO:0007669"/>
    <property type="project" value="UniProtKB-SubCell"/>
</dbReference>
<dbReference type="GO" id="GO:0015648">
    <property type="term" value="F:lipid-linked peptidoglycan transporter activity"/>
    <property type="evidence" value="ECO:0007669"/>
    <property type="project" value="TreeGrafter"/>
</dbReference>
<dbReference type="GO" id="GO:0008955">
    <property type="term" value="F:peptidoglycan glycosyltransferase activity"/>
    <property type="evidence" value="ECO:0007669"/>
    <property type="project" value="UniProtKB-UniRule"/>
</dbReference>
<dbReference type="GO" id="GO:0051301">
    <property type="term" value="P:cell division"/>
    <property type="evidence" value="ECO:0007669"/>
    <property type="project" value="InterPro"/>
</dbReference>
<dbReference type="GO" id="GO:0071555">
    <property type="term" value="P:cell wall organization"/>
    <property type="evidence" value="ECO:0007669"/>
    <property type="project" value="UniProtKB-KW"/>
</dbReference>
<dbReference type="GO" id="GO:0009252">
    <property type="term" value="P:peptidoglycan biosynthetic process"/>
    <property type="evidence" value="ECO:0007669"/>
    <property type="project" value="UniProtKB-UniRule"/>
</dbReference>
<dbReference type="GO" id="GO:0008360">
    <property type="term" value="P:regulation of cell shape"/>
    <property type="evidence" value="ECO:0007669"/>
    <property type="project" value="UniProtKB-KW"/>
</dbReference>
<dbReference type="HAMAP" id="MF_02079">
    <property type="entry name" value="PGT_RodA"/>
    <property type="match status" value="1"/>
</dbReference>
<dbReference type="InterPro" id="IPR018365">
    <property type="entry name" value="Cell_cycle_FtsW-rel_CS"/>
</dbReference>
<dbReference type="InterPro" id="IPR001182">
    <property type="entry name" value="FtsW/RodA"/>
</dbReference>
<dbReference type="InterPro" id="IPR011923">
    <property type="entry name" value="RodA/MrdB"/>
</dbReference>
<dbReference type="NCBIfam" id="NF008060">
    <property type="entry name" value="PRK10794.1"/>
    <property type="match status" value="1"/>
</dbReference>
<dbReference type="NCBIfam" id="TIGR02210">
    <property type="entry name" value="rodA_shape"/>
    <property type="match status" value="1"/>
</dbReference>
<dbReference type="PANTHER" id="PTHR30474">
    <property type="entry name" value="CELL CYCLE PROTEIN"/>
    <property type="match status" value="1"/>
</dbReference>
<dbReference type="PANTHER" id="PTHR30474:SF1">
    <property type="entry name" value="PEPTIDOGLYCAN GLYCOSYLTRANSFERASE MRDB"/>
    <property type="match status" value="1"/>
</dbReference>
<dbReference type="Pfam" id="PF01098">
    <property type="entry name" value="FTSW_RODA_SPOVE"/>
    <property type="match status" value="1"/>
</dbReference>
<dbReference type="PROSITE" id="PS00428">
    <property type="entry name" value="FTSW_RODA_SPOVE"/>
    <property type="match status" value="1"/>
</dbReference>
<reference key="1">
    <citation type="journal article" date="2001" name="Nature">
        <title>Genome sequence of enterohaemorrhagic Escherichia coli O157:H7.</title>
        <authorList>
            <person name="Perna N.T."/>
            <person name="Plunkett G. III"/>
            <person name="Burland V."/>
            <person name="Mau B."/>
            <person name="Glasner J.D."/>
            <person name="Rose D.J."/>
            <person name="Mayhew G.F."/>
            <person name="Evans P.S."/>
            <person name="Gregor J."/>
            <person name="Kirkpatrick H.A."/>
            <person name="Posfai G."/>
            <person name="Hackett J."/>
            <person name="Klink S."/>
            <person name="Boutin A."/>
            <person name="Shao Y."/>
            <person name="Miller L."/>
            <person name="Grotbeck E.J."/>
            <person name="Davis N.W."/>
            <person name="Lim A."/>
            <person name="Dimalanta E.T."/>
            <person name="Potamousis K."/>
            <person name="Apodaca J."/>
            <person name="Anantharaman T.S."/>
            <person name="Lin J."/>
            <person name="Yen G."/>
            <person name="Schwartz D.C."/>
            <person name="Welch R.A."/>
            <person name="Blattner F.R."/>
        </authorList>
    </citation>
    <scope>NUCLEOTIDE SEQUENCE [LARGE SCALE GENOMIC DNA]</scope>
    <source>
        <strain>O157:H7 / EDL933 / ATCC 700927 / EHEC</strain>
    </source>
</reference>
<reference key="2">
    <citation type="journal article" date="2001" name="DNA Res.">
        <title>Complete genome sequence of enterohemorrhagic Escherichia coli O157:H7 and genomic comparison with a laboratory strain K-12.</title>
        <authorList>
            <person name="Hayashi T."/>
            <person name="Makino K."/>
            <person name="Ohnishi M."/>
            <person name="Kurokawa K."/>
            <person name="Ishii K."/>
            <person name="Yokoyama K."/>
            <person name="Han C.-G."/>
            <person name="Ohtsubo E."/>
            <person name="Nakayama K."/>
            <person name="Murata T."/>
            <person name="Tanaka M."/>
            <person name="Tobe T."/>
            <person name="Iida T."/>
            <person name="Takami H."/>
            <person name="Honda T."/>
            <person name="Sasakawa C."/>
            <person name="Ogasawara N."/>
            <person name="Yasunaga T."/>
            <person name="Kuhara S."/>
            <person name="Shiba T."/>
            <person name="Hattori M."/>
            <person name="Shinagawa H."/>
        </authorList>
    </citation>
    <scope>NUCLEOTIDE SEQUENCE [LARGE SCALE GENOMIC DNA]</scope>
    <source>
        <strain>O157:H7 / Sakai / RIMD 0509952 / EHEC</strain>
    </source>
</reference>
<gene>
    <name evidence="1" type="primary">mrdB</name>
    <name type="synonym">rodA</name>
    <name type="ordered locus">Z0780</name>
    <name type="ordered locus">ECs0672</name>
</gene>